<feature type="chain" id="PRO_0000371476" description="Uncharacterized protein IMPP15">
    <location>
        <begin position="1" status="less than"/>
        <end position="15" status="greater than"/>
    </location>
</feature>
<feature type="unsure residue" description="L or I" evidence="1">
    <location>
        <position position="1"/>
    </location>
</feature>
<feature type="unsure residue" description="L or I" evidence="1">
    <location>
        <position position="11"/>
    </location>
</feature>
<feature type="non-terminal residue" evidence="2">
    <location>
        <position position="1"/>
    </location>
</feature>
<feature type="non-terminal residue" evidence="2">
    <location>
        <position position="15"/>
    </location>
</feature>
<proteinExistence type="evidence at protein level"/>
<protein>
    <recommendedName>
        <fullName evidence="2">Uncharacterized protein IMPP15</fullName>
    </recommendedName>
</protein>
<accession>P85369</accession>
<evidence type="ECO:0000269" key="1">
    <source>
    </source>
</evidence>
<evidence type="ECO:0000303" key="2">
    <source>
    </source>
</evidence>
<sequence>LGSPFGGFDTLGSNR</sequence>
<organism>
    <name type="scientific">Nautilus macromphalus</name>
    <name type="common">Bellybutton nautilus</name>
    <dbReference type="NCBI Taxonomy" id="34576"/>
    <lineage>
        <taxon>Eukaryota</taxon>
        <taxon>Metazoa</taxon>
        <taxon>Spiralia</taxon>
        <taxon>Lophotrochozoa</taxon>
        <taxon>Mollusca</taxon>
        <taxon>Cephalopoda</taxon>
        <taxon>Nautiloidea</taxon>
        <taxon>Nautilida</taxon>
        <taxon>Nautilidae</taxon>
        <taxon>Nautilus</taxon>
    </lineage>
</organism>
<comment type="tissue specificity">
    <text evidence="1">Nacreous layer of shell.</text>
</comment>
<reference key="1">
    <citation type="journal article" date="2009" name="ChemBioChem">
        <title>Evolution of nacre: biochemistry and 'shellomics' of the shell organic matrix of the cephalopod Nautilus macromphalus.</title>
        <authorList>
            <person name="Marie B."/>
            <person name="Marin F."/>
            <person name="Marie A."/>
            <person name="Bedouet L."/>
            <person name="Dubost L."/>
            <person name="Alcaraz G."/>
            <person name="Milet C."/>
            <person name="Luquet G."/>
        </authorList>
    </citation>
    <scope>PROTEIN SEQUENCE</scope>
    <scope>TISSUE SPECIFICITY</scope>
    <source>
        <tissue>Shell</tissue>
    </source>
</reference>
<keyword id="KW-0903">Direct protein sequencing</keyword>
<name>IMP15_NAUMA</name>